<proteinExistence type="inferred from homology"/>
<comment type="catalytic activity">
    <reaction evidence="1">
        <text>tRNA(Leu) + L-leucine + ATP = L-leucyl-tRNA(Leu) + AMP + diphosphate</text>
        <dbReference type="Rhea" id="RHEA:11688"/>
        <dbReference type="Rhea" id="RHEA-COMP:9613"/>
        <dbReference type="Rhea" id="RHEA-COMP:9622"/>
        <dbReference type="ChEBI" id="CHEBI:30616"/>
        <dbReference type="ChEBI" id="CHEBI:33019"/>
        <dbReference type="ChEBI" id="CHEBI:57427"/>
        <dbReference type="ChEBI" id="CHEBI:78442"/>
        <dbReference type="ChEBI" id="CHEBI:78494"/>
        <dbReference type="ChEBI" id="CHEBI:456215"/>
        <dbReference type="EC" id="6.1.1.4"/>
    </reaction>
</comment>
<comment type="subcellular location">
    <subcellularLocation>
        <location evidence="1">Cytoplasm</location>
    </subcellularLocation>
</comment>
<comment type="similarity">
    <text evidence="1">Belongs to the class-I aminoacyl-tRNA synthetase family.</text>
</comment>
<protein>
    <recommendedName>
        <fullName evidence="1">Leucine--tRNA ligase</fullName>
        <ecNumber evidence="1">6.1.1.4</ecNumber>
    </recommendedName>
    <alternativeName>
        <fullName evidence="1">Leucyl-tRNA synthetase</fullName>
        <shortName evidence="1">LeuRS</shortName>
    </alternativeName>
</protein>
<name>SYL_GLOVI</name>
<reference key="1">
    <citation type="journal article" date="2003" name="DNA Res.">
        <title>Complete genome structure of Gloeobacter violaceus PCC 7421, a cyanobacterium that lacks thylakoids.</title>
        <authorList>
            <person name="Nakamura Y."/>
            <person name="Kaneko T."/>
            <person name="Sato S."/>
            <person name="Mimuro M."/>
            <person name="Miyashita H."/>
            <person name="Tsuchiya T."/>
            <person name="Sasamoto S."/>
            <person name="Watanabe A."/>
            <person name="Kawashima K."/>
            <person name="Kishida Y."/>
            <person name="Kiyokawa C."/>
            <person name="Kohara M."/>
            <person name="Matsumoto M."/>
            <person name="Matsuno A."/>
            <person name="Nakazaki N."/>
            <person name="Shimpo S."/>
            <person name="Takeuchi C."/>
            <person name="Yamada M."/>
            <person name="Tabata S."/>
        </authorList>
    </citation>
    <scope>NUCLEOTIDE SEQUENCE [LARGE SCALE GENOMIC DNA]</scope>
    <source>
        <strain>ATCC 29082 / PCC 7421</strain>
    </source>
</reference>
<accession>Q7NE01</accession>
<organism>
    <name type="scientific">Gloeobacter violaceus (strain ATCC 29082 / PCC 7421)</name>
    <dbReference type="NCBI Taxonomy" id="251221"/>
    <lineage>
        <taxon>Bacteria</taxon>
        <taxon>Bacillati</taxon>
        <taxon>Cyanobacteriota</taxon>
        <taxon>Cyanophyceae</taxon>
        <taxon>Gloeobacterales</taxon>
        <taxon>Gloeobacteraceae</taxon>
        <taxon>Gloeobacter</taxon>
    </lineage>
</organism>
<feature type="chain" id="PRO_0000152021" description="Leucine--tRNA ligase">
    <location>
        <begin position="1"/>
        <end position="847"/>
    </location>
</feature>
<feature type="short sequence motif" description="'HIGH' region">
    <location>
        <begin position="39"/>
        <end position="49"/>
    </location>
</feature>
<feature type="short sequence motif" description="'KMSKS' region">
    <location>
        <begin position="613"/>
        <end position="617"/>
    </location>
</feature>
<feature type="binding site" evidence="1">
    <location>
        <position position="616"/>
    </location>
    <ligand>
        <name>ATP</name>
        <dbReference type="ChEBI" id="CHEBI:30616"/>
    </ligand>
</feature>
<evidence type="ECO:0000255" key="1">
    <source>
        <dbReference type="HAMAP-Rule" id="MF_00049"/>
    </source>
</evidence>
<keyword id="KW-0030">Aminoacyl-tRNA synthetase</keyword>
<keyword id="KW-0067">ATP-binding</keyword>
<keyword id="KW-0963">Cytoplasm</keyword>
<keyword id="KW-0436">Ligase</keyword>
<keyword id="KW-0547">Nucleotide-binding</keyword>
<keyword id="KW-0648">Protein biosynthesis</keyword>
<keyword id="KW-1185">Reference proteome</keyword>
<sequence>METRYNPHAIEPRRQKQWEEAPHLAMDGRPKFYALSMFPYPSGALHMGHVRNYSITDVISRYKRMRGFNVLHPIGWDAFGLPAENAAIDRGIHPAQWTEQNIAQMREQLKRLGFAYAWEREVATCSPAYYRWTQKLFLEFWKAGLAYRKAGVVNWDPVDQTVLANEQVDAEGRSWRSGALVEKRPLEQWYLKITDYAEELLQALGTLGDWPERVRVMQENWIGKSVGAELCFPINGEPEGIRVFTTRPDTVYGVTYLVLAPEHPLVERITAPERREAVRAFVAQVQSESEIERVSEDRPKQGVSTGAVALNPFTGQAVPVWIADYVLFEYGTGAVMGVPGHDERDFVFASQYELPIRLVVQAPDGSLTEPLRAAYTEVGVLVNSGPFNGLDSPTGKLKIVEYAEQQGWGKGRVQYRLRDWLISRQRYWGCPIPMVYCPECGVVPVPDEQLPVALPGDVEFSGRGPSPLAKLEGWICVDCPQCGAPARRETDTMDTFIDSSWYFLRFADARNGAEPFSREAVDYWLPVDQYVGGIEHAILHLLYSRFFTKVLRDRGLLSFDEPFKRLLTQGMVLSNAFVDPATKKYYPPDQVEERGGAFFARPDGTPLVCAMEKMSKSKYNGIDPLTVRSEYGADTARLFVLFKAPPEKELEWSDADVRGQYSFLGRVWRTVYEFVSGEKPDRPVGEAQERDLRREVHRAIQQVGGDIEQYKFNTAIAALMKLNNAMADYPSGQSPAYKEGVYVIVKLLAPFAPHIGAELWQALGEAGDIHTSDWPALDESALVEETIVLVIQVNGKKRDDIQVPAAASEGELQELALASEAVRRHTDGKAIKKVIVVPGRLINLVVG</sequence>
<dbReference type="EC" id="6.1.1.4" evidence="1"/>
<dbReference type="EMBL" id="BA000045">
    <property type="protein sequence ID" value="BAC92022.1"/>
    <property type="molecule type" value="Genomic_DNA"/>
</dbReference>
<dbReference type="RefSeq" id="NP_927027.1">
    <property type="nucleotide sequence ID" value="NC_005125.1"/>
</dbReference>
<dbReference type="RefSeq" id="WP_011144067.1">
    <property type="nucleotide sequence ID" value="NC_005125.1"/>
</dbReference>
<dbReference type="SMR" id="Q7NE01"/>
<dbReference type="FunCoup" id="Q7NE01">
    <property type="interactions" value="406"/>
</dbReference>
<dbReference type="STRING" id="251221.gene:10761599"/>
<dbReference type="EnsemblBacteria" id="BAC92022">
    <property type="protein sequence ID" value="BAC92022"/>
    <property type="gene ID" value="BAC92022"/>
</dbReference>
<dbReference type="KEGG" id="gvi:gll4081"/>
<dbReference type="PATRIC" id="fig|251221.4.peg.4113"/>
<dbReference type="eggNOG" id="COG0495">
    <property type="taxonomic scope" value="Bacteria"/>
</dbReference>
<dbReference type="HOGENOM" id="CLU_004427_0_0_3"/>
<dbReference type="InParanoid" id="Q7NE01"/>
<dbReference type="OrthoDB" id="9810365at2"/>
<dbReference type="PhylomeDB" id="Q7NE01"/>
<dbReference type="Proteomes" id="UP000000557">
    <property type="component" value="Chromosome"/>
</dbReference>
<dbReference type="GO" id="GO:0005829">
    <property type="term" value="C:cytosol"/>
    <property type="evidence" value="ECO:0000318"/>
    <property type="project" value="GO_Central"/>
</dbReference>
<dbReference type="GO" id="GO:0002161">
    <property type="term" value="F:aminoacyl-tRNA deacylase activity"/>
    <property type="evidence" value="ECO:0007669"/>
    <property type="project" value="InterPro"/>
</dbReference>
<dbReference type="GO" id="GO:0005524">
    <property type="term" value="F:ATP binding"/>
    <property type="evidence" value="ECO:0007669"/>
    <property type="project" value="UniProtKB-UniRule"/>
</dbReference>
<dbReference type="GO" id="GO:0004823">
    <property type="term" value="F:leucine-tRNA ligase activity"/>
    <property type="evidence" value="ECO:0000318"/>
    <property type="project" value="GO_Central"/>
</dbReference>
<dbReference type="GO" id="GO:0006429">
    <property type="term" value="P:leucyl-tRNA aminoacylation"/>
    <property type="evidence" value="ECO:0000318"/>
    <property type="project" value="GO_Central"/>
</dbReference>
<dbReference type="CDD" id="cd07958">
    <property type="entry name" value="Anticodon_Ia_Leu_BEm"/>
    <property type="match status" value="1"/>
</dbReference>
<dbReference type="CDD" id="cd00812">
    <property type="entry name" value="LeuRS_core"/>
    <property type="match status" value="1"/>
</dbReference>
<dbReference type="FunFam" id="3.10.20.590:FF:000001">
    <property type="entry name" value="Leucine--tRNA ligase"/>
    <property type="match status" value="1"/>
</dbReference>
<dbReference type="FunFam" id="3.40.50.620:FF:000003">
    <property type="entry name" value="Leucine--tRNA ligase"/>
    <property type="match status" value="1"/>
</dbReference>
<dbReference type="FunFam" id="1.10.730.10:FF:000011">
    <property type="entry name" value="Leucine--tRNA ligase chloroplastic/mitochondrial"/>
    <property type="match status" value="1"/>
</dbReference>
<dbReference type="FunFam" id="3.40.50.620:FF:000100">
    <property type="entry name" value="probable leucine--tRNA ligase, mitochondrial"/>
    <property type="match status" value="1"/>
</dbReference>
<dbReference type="Gene3D" id="2.20.28.290">
    <property type="match status" value="1"/>
</dbReference>
<dbReference type="Gene3D" id="3.10.20.590">
    <property type="match status" value="1"/>
</dbReference>
<dbReference type="Gene3D" id="3.40.50.620">
    <property type="entry name" value="HUPs"/>
    <property type="match status" value="2"/>
</dbReference>
<dbReference type="Gene3D" id="1.10.730.10">
    <property type="entry name" value="Isoleucyl-tRNA Synthetase, Domain 1"/>
    <property type="match status" value="1"/>
</dbReference>
<dbReference type="Gene3D" id="3.90.740.10">
    <property type="entry name" value="Valyl/Leucyl/Isoleucyl-tRNA synthetase, editing domain"/>
    <property type="match status" value="1"/>
</dbReference>
<dbReference type="HAMAP" id="MF_00049_B">
    <property type="entry name" value="Leu_tRNA_synth_B"/>
    <property type="match status" value="1"/>
</dbReference>
<dbReference type="InterPro" id="IPR001412">
    <property type="entry name" value="aa-tRNA-synth_I_CS"/>
</dbReference>
<dbReference type="InterPro" id="IPR002300">
    <property type="entry name" value="aa-tRNA-synth_Ia"/>
</dbReference>
<dbReference type="InterPro" id="IPR002302">
    <property type="entry name" value="Leu-tRNA-ligase"/>
</dbReference>
<dbReference type="InterPro" id="IPR025709">
    <property type="entry name" value="Leu_tRNA-synth_edit"/>
</dbReference>
<dbReference type="InterPro" id="IPR013155">
    <property type="entry name" value="M/V/L/I-tRNA-synth_anticd-bd"/>
</dbReference>
<dbReference type="InterPro" id="IPR015413">
    <property type="entry name" value="Methionyl/Leucyl_tRNA_Synth"/>
</dbReference>
<dbReference type="InterPro" id="IPR014729">
    <property type="entry name" value="Rossmann-like_a/b/a_fold"/>
</dbReference>
<dbReference type="InterPro" id="IPR009080">
    <property type="entry name" value="tRNAsynth_Ia_anticodon-bd"/>
</dbReference>
<dbReference type="InterPro" id="IPR009008">
    <property type="entry name" value="Val/Leu/Ile-tRNA-synth_edit"/>
</dbReference>
<dbReference type="NCBIfam" id="TIGR00396">
    <property type="entry name" value="leuS_bact"/>
    <property type="match status" value="1"/>
</dbReference>
<dbReference type="PANTHER" id="PTHR43740:SF2">
    <property type="entry name" value="LEUCINE--TRNA LIGASE, MITOCHONDRIAL"/>
    <property type="match status" value="1"/>
</dbReference>
<dbReference type="PANTHER" id="PTHR43740">
    <property type="entry name" value="LEUCYL-TRNA SYNTHETASE"/>
    <property type="match status" value="1"/>
</dbReference>
<dbReference type="Pfam" id="PF08264">
    <property type="entry name" value="Anticodon_1"/>
    <property type="match status" value="1"/>
</dbReference>
<dbReference type="Pfam" id="PF00133">
    <property type="entry name" value="tRNA-synt_1"/>
    <property type="match status" value="2"/>
</dbReference>
<dbReference type="Pfam" id="PF13603">
    <property type="entry name" value="tRNA-synt_1_2"/>
    <property type="match status" value="1"/>
</dbReference>
<dbReference type="Pfam" id="PF09334">
    <property type="entry name" value="tRNA-synt_1g"/>
    <property type="match status" value="1"/>
</dbReference>
<dbReference type="PRINTS" id="PR00985">
    <property type="entry name" value="TRNASYNTHLEU"/>
</dbReference>
<dbReference type="SUPFAM" id="SSF47323">
    <property type="entry name" value="Anticodon-binding domain of a subclass of class I aminoacyl-tRNA synthetases"/>
    <property type="match status" value="1"/>
</dbReference>
<dbReference type="SUPFAM" id="SSF52374">
    <property type="entry name" value="Nucleotidylyl transferase"/>
    <property type="match status" value="1"/>
</dbReference>
<dbReference type="SUPFAM" id="SSF50677">
    <property type="entry name" value="ValRS/IleRS/LeuRS editing domain"/>
    <property type="match status" value="1"/>
</dbReference>
<dbReference type="PROSITE" id="PS00178">
    <property type="entry name" value="AA_TRNA_LIGASE_I"/>
    <property type="match status" value="1"/>
</dbReference>
<gene>
    <name evidence="1" type="primary">leuS</name>
    <name type="ordered locus">gll4081</name>
</gene>